<comment type="function">
    <text evidence="1">Catalyzes the methylthiolation of N6-(dimethylallyl)adenosine (i(6)A), leading to the formation of 2-methylthio-N6-(dimethylallyl)adenosine (ms(2)i(6)A) at position 37 in tRNAs that read codons beginning with uridine.</text>
</comment>
<comment type="catalytic activity">
    <reaction evidence="1">
        <text>N(6)-dimethylallyladenosine(37) in tRNA + (sulfur carrier)-SH + AH2 + 2 S-adenosyl-L-methionine = 2-methylsulfanyl-N(6)-dimethylallyladenosine(37) in tRNA + (sulfur carrier)-H + 5'-deoxyadenosine + L-methionine + A + S-adenosyl-L-homocysteine + 2 H(+)</text>
        <dbReference type="Rhea" id="RHEA:37067"/>
        <dbReference type="Rhea" id="RHEA-COMP:10375"/>
        <dbReference type="Rhea" id="RHEA-COMP:10376"/>
        <dbReference type="Rhea" id="RHEA-COMP:14737"/>
        <dbReference type="Rhea" id="RHEA-COMP:14739"/>
        <dbReference type="ChEBI" id="CHEBI:13193"/>
        <dbReference type="ChEBI" id="CHEBI:15378"/>
        <dbReference type="ChEBI" id="CHEBI:17319"/>
        <dbReference type="ChEBI" id="CHEBI:17499"/>
        <dbReference type="ChEBI" id="CHEBI:29917"/>
        <dbReference type="ChEBI" id="CHEBI:57844"/>
        <dbReference type="ChEBI" id="CHEBI:57856"/>
        <dbReference type="ChEBI" id="CHEBI:59789"/>
        <dbReference type="ChEBI" id="CHEBI:64428"/>
        <dbReference type="ChEBI" id="CHEBI:74415"/>
        <dbReference type="ChEBI" id="CHEBI:74417"/>
        <dbReference type="EC" id="2.8.4.3"/>
    </reaction>
</comment>
<comment type="cofactor">
    <cofactor evidence="1">
        <name>[4Fe-4S] cluster</name>
        <dbReference type="ChEBI" id="CHEBI:49883"/>
    </cofactor>
    <text evidence="1">Binds 2 [4Fe-4S] clusters. One cluster is coordinated with 3 cysteines and an exchangeable S-adenosyl-L-methionine.</text>
</comment>
<comment type="subunit">
    <text evidence="1">Monomer.</text>
</comment>
<comment type="subcellular location">
    <subcellularLocation>
        <location evidence="1">Cytoplasm</location>
    </subcellularLocation>
</comment>
<comment type="similarity">
    <text evidence="1">Belongs to the methylthiotransferase family. MiaB subfamily.</text>
</comment>
<proteinExistence type="inferred from homology"/>
<organism>
    <name type="scientific">Francisella tularensis subsp. holarctica (strain FTNF002-00 / FTA)</name>
    <dbReference type="NCBI Taxonomy" id="458234"/>
    <lineage>
        <taxon>Bacteria</taxon>
        <taxon>Pseudomonadati</taxon>
        <taxon>Pseudomonadota</taxon>
        <taxon>Gammaproteobacteria</taxon>
        <taxon>Thiotrichales</taxon>
        <taxon>Francisellaceae</taxon>
        <taxon>Francisella</taxon>
    </lineage>
</organism>
<feature type="chain" id="PRO_0000374303" description="tRNA-2-methylthio-N(6)-dimethylallyladenosine synthase">
    <location>
        <begin position="1"/>
        <end position="442"/>
    </location>
</feature>
<feature type="domain" description="MTTase N-terminal" evidence="1">
    <location>
        <begin position="5"/>
        <end position="122"/>
    </location>
</feature>
<feature type="domain" description="Radical SAM core" evidence="2">
    <location>
        <begin position="145"/>
        <end position="378"/>
    </location>
</feature>
<feature type="domain" description="TRAM" evidence="1">
    <location>
        <begin position="380"/>
        <end position="442"/>
    </location>
</feature>
<feature type="binding site" evidence="1">
    <location>
        <position position="14"/>
    </location>
    <ligand>
        <name>[4Fe-4S] cluster</name>
        <dbReference type="ChEBI" id="CHEBI:49883"/>
        <label>1</label>
    </ligand>
</feature>
<feature type="binding site" evidence="1">
    <location>
        <position position="51"/>
    </location>
    <ligand>
        <name>[4Fe-4S] cluster</name>
        <dbReference type="ChEBI" id="CHEBI:49883"/>
        <label>1</label>
    </ligand>
</feature>
<feature type="binding site" evidence="1">
    <location>
        <position position="85"/>
    </location>
    <ligand>
        <name>[4Fe-4S] cluster</name>
        <dbReference type="ChEBI" id="CHEBI:49883"/>
        <label>1</label>
    </ligand>
</feature>
<feature type="binding site" evidence="1">
    <location>
        <position position="159"/>
    </location>
    <ligand>
        <name>[4Fe-4S] cluster</name>
        <dbReference type="ChEBI" id="CHEBI:49883"/>
        <label>2</label>
        <note>4Fe-4S-S-AdoMet</note>
    </ligand>
</feature>
<feature type="binding site" evidence="1">
    <location>
        <position position="163"/>
    </location>
    <ligand>
        <name>[4Fe-4S] cluster</name>
        <dbReference type="ChEBI" id="CHEBI:49883"/>
        <label>2</label>
        <note>4Fe-4S-S-AdoMet</note>
    </ligand>
</feature>
<feature type="binding site" evidence="1">
    <location>
        <position position="166"/>
    </location>
    <ligand>
        <name>[4Fe-4S] cluster</name>
        <dbReference type="ChEBI" id="CHEBI:49883"/>
        <label>2</label>
        <note>4Fe-4S-S-AdoMet</note>
    </ligand>
</feature>
<keyword id="KW-0004">4Fe-4S</keyword>
<keyword id="KW-0963">Cytoplasm</keyword>
<keyword id="KW-0408">Iron</keyword>
<keyword id="KW-0411">Iron-sulfur</keyword>
<keyword id="KW-0479">Metal-binding</keyword>
<keyword id="KW-0949">S-adenosyl-L-methionine</keyword>
<keyword id="KW-0808">Transferase</keyword>
<keyword id="KW-0819">tRNA processing</keyword>
<name>MIAB_FRATF</name>
<gene>
    <name evidence="1" type="primary">miaB</name>
    <name type="ordered locus">FTA_0937</name>
</gene>
<protein>
    <recommendedName>
        <fullName evidence="1">tRNA-2-methylthio-N(6)-dimethylallyladenosine synthase</fullName>
        <ecNumber evidence="1">2.8.4.3</ecNumber>
    </recommendedName>
    <alternativeName>
        <fullName evidence="1">(Dimethylallyl)adenosine tRNA methylthiotransferase MiaB</fullName>
    </alternativeName>
    <alternativeName>
        <fullName evidence="1">tRNA-i(6)A37 methylthiotransferase</fullName>
    </alternativeName>
</protein>
<sequence length="442" mass="50164">MKEQKKVFIKTLGCQMNEYDSARMHEVLNEHFDTVKTDDYKDADIILINTCSIREKAQEKVFHELGRWKGLKKTNEDLIIGVGGCVASQEGENIIKRAPFVDLVFGPQTIHRLPEMIKQKQKSQQSQVDISFPEVEKFDYLPEPKAEGAKAYVSIMEGCDKYCSYCVVPYTRGPEVNRPFEDVLAECAILAEQGVKEITLLGQNVNHYLGPMENGQTADLALLIHFIAEIDGIERIRFTTSHPVEFSQNLIDAYATVPELANHLHLPVQHGSDRILINMKRNHTILEFKQKIRKLRAIRPDITISSDFIVGFPGETEEDFQKLLDLVKEINFDQSFSFIYSKRPGTPAADLPDDTPMEVKKDRLKRLQDLLNSNAQIISRQMVGTNQRILVDGTSKKDDNILSGRTENNRVVNFKGDKSLIGQFAMVKITESLPNSLRGELI</sequence>
<dbReference type="EC" id="2.8.4.3" evidence="1"/>
<dbReference type="EMBL" id="CP000803">
    <property type="protein sequence ID" value="ABU61413.1"/>
    <property type="molecule type" value="Genomic_DNA"/>
</dbReference>
<dbReference type="RefSeq" id="WP_003018765.1">
    <property type="nucleotide sequence ID" value="NC_009749.1"/>
</dbReference>
<dbReference type="SMR" id="A7NBR0"/>
<dbReference type="KEGG" id="fta:FTA_0937"/>
<dbReference type="HOGENOM" id="CLU_018697_2_0_6"/>
<dbReference type="GO" id="GO:0005829">
    <property type="term" value="C:cytosol"/>
    <property type="evidence" value="ECO:0007669"/>
    <property type="project" value="TreeGrafter"/>
</dbReference>
<dbReference type="GO" id="GO:0051539">
    <property type="term" value="F:4 iron, 4 sulfur cluster binding"/>
    <property type="evidence" value="ECO:0007669"/>
    <property type="project" value="UniProtKB-UniRule"/>
</dbReference>
<dbReference type="GO" id="GO:0046872">
    <property type="term" value="F:metal ion binding"/>
    <property type="evidence" value="ECO:0007669"/>
    <property type="project" value="UniProtKB-KW"/>
</dbReference>
<dbReference type="GO" id="GO:0035597">
    <property type="term" value="F:N6-isopentenyladenosine methylthiotransferase activity"/>
    <property type="evidence" value="ECO:0007669"/>
    <property type="project" value="TreeGrafter"/>
</dbReference>
<dbReference type="CDD" id="cd01335">
    <property type="entry name" value="Radical_SAM"/>
    <property type="match status" value="1"/>
</dbReference>
<dbReference type="FunFam" id="3.40.50.12160:FF:000001">
    <property type="entry name" value="tRNA-2-methylthio-N(6)-dimethylallyladenosine synthase"/>
    <property type="match status" value="1"/>
</dbReference>
<dbReference type="FunFam" id="3.80.30.20:FF:000001">
    <property type="entry name" value="tRNA-2-methylthio-N(6)-dimethylallyladenosine synthase 2"/>
    <property type="match status" value="1"/>
</dbReference>
<dbReference type="Gene3D" id="3.40.50.12160">
    <property type="entry name" value="Methylthiotransferase, N-terminal domain"/>
    <property type="match status" value="1"/>
</dbReference>
<dbReference type="Gene3D" id="3.80.30.20">
    <property type="entry name" value="tm_1862 like domain"/>
    <property type="match status" value="1"/>
</dbReference>
<dbReference type="HAMAP" id="MF_01864">
    <property type="entry name" value="tRNA_metthiotr_MiaB"/>
    <property type="match status" value="1"/>
</dbReference>
<dbReference type="InterPro" id="IPR006638">
    <property type="entry name" value="Elp3/MiaA/NifB-like_rSAM"/>
</dbReference>
<dbReference type="InterPro" id="IPR005839">
    <property type="entry name" value="Methylthiotransferase"/>
</dbReference>
<dbReference type="InterPro" id="IPR020612">
    <property type="entry name" value="Methylthiotransferase_CS"/>
</dbReference>
<dbReference type="InterPro" id="IPR013848">
    <property type="entry name" value="Methylthiotransferase_N"/>
</dbReference>
<dbReference type="InterPro" id="IPR038135">
    <property type="entry name" value="Methylthiotransferase_N_sf"/>
</dbReference>
<dbReference type="InterPro" id="IPR006463">
    <property type="entry name" value="MiaB_methiolase"/>
</dbReference>
<dbReference type="InterPro" id="IPR007197">
    <property type="entry name" value="rSAM"/>
</dbReference>
<dbReference type="InterPro" id="IPR023404">
    <property type="entry name" value="rSAM_horseshoe"/>
</dbReference>
<dbReference type="InterPro" id="IPR002792">
    <property type="entry name" value="TRAM_dom"/>
</dbReference>
<dbReference type="NCBIfam" id="TIGR01574">
    <property type="entry name" value="miaB-methiolase"/>
    <property type="match status" value="1"/>
</dbReference>
<dbReference type="NCBIfam" id="TIGR00089">
    <property type="entry name" value="MiaB/RimO family radical SAM methylthiotransferase"/>
    <property type="match status" value="1"/>
</dbReference>
<dbReference type="PANTHER" id="PTHR43020">
    <property type="entry name" value="CDK5 REGULATORY SUBUNIT-ASSOCIATED PROTEIN 1"/>
    <property type="match status" value="1"/>
</dbReference>
<dbReference type="PANTHER" id="PTHR43020:SF2">
    <property type="entry name" value="MITOCHONDRIAL TRNA METHYLTHIOTRANSFERASE CDK5RAP1"/>
    <property type="match status" value="1"/>
</dbReference>
<dbReference type="Pfam" id="PF04055">
    <property type="entry name" value="Radical_SAM"/>
    <property type="match status" value="1"/>
</dbReference>
<dbReference type="Pfam" id="PF01938">
    <property type="entry name" value="TRAM"/>
    <property type="match status" value="1"/>
</dbReference>
<dbReference type="Pfam" id="PF00919">
    <property type="entry name" value="UPF0004"/>
    <property type="match status" value="1"/>
</dbReference>
<dbReference type="SFLD" id="SFLDF00273">
    <property type="entry name" value="(dimethylallyl)adenosine_tRNA"/>
    <property type="match status" value="1"/>
</dbReference>
<dbReference type="SFLD" id="SFLDG01082">
    <property type="entry name" value="B12-binding_domain_containing"/>
    <property type="match status" value="1"/>
</dbReference>
<dbReference type="SFLD" id="SFLDS00029">
    <property type="entry name" value="Radical_SAM"/>
    <property type="match status" value="1"/>
</dbReference>
<dbReference type="SMART" id="SM00729">
    <property type="entry name" value="Elp3"/>
    <property type="match status" value="1"/>
</dbReference>
<dbReference type="SUPFAM" id="SSF102114">
    <property type="entry name" value="Radical SAM enzymes"/>
    <property type="match status" value="1"/>
</dbReference>
<dbReference type="PROSITE" id="PS51449">
    <property type="entry name" value="MTTASE_N"/>
    <property type="match status" value="1"/>
</dbReference>
<dbReference type="PROSITE" id="PS01278">
    <property type="entry name" value="MTTASE_RADICAL"/>
    <property type="match status" value="1"/>
</dbReference>
<dbReference type="PROSITE" id="PS51918">
    <property type="entry name" value="RADICAL_SAM"/>
    <property type="match status" value="1"/>
</dbReference>
<dbReference type="PROSITE" id="PS50926">
    <property type="entry name" value="TRAM"/>
    <property type="match status" value="1"/>
</dbReference>
<accession>A7NBR0</accession>
<evidence type="ECO:0000255" key="1">
    <source>
        <dbReference type="HAMAP-Rule" id="MF_01864"/>
    </source>
</evidence>
<evidence type="ECO:0000255" key="2">
    <source>
        <dbReference type="PROSITE-ProRule" id="PRU01266"/>
    </source>
</evidence>
<reference key="1">
    <citation type="journal article" date="2009" name="PLoS ONE">
        <title>Complete genome sequence of Francisella tularensis subspecies holarctica FTNF002-00.</title>
        <authorList>
            <person name="Barabote R.D."/>
            <person name="Xie G."/>
            <person name="Brettin T.S."/>
            <person name="Hinrichs S.H."/>
            <person name="Fey P.D."/>
            <person name="Jay J.J."/>
            <person name="Engle J.L."/>
            <person name="Godbole S.D."/>
            <person name="Noronha J.M."/>
            <person name="Scheuermann R.H."/>
            <person name="Zhou L.W."/>
            <person name="Lion C."/>
            <person name="Dempsey M.P."/>
        </authorList>
    </citation>
    <scope>NUCLEOTIDE SEQUENCE [LARGE SCALE GENOMIC DNA]</scope>
    <source>
        <strain>FTNF002-00 / FTA</strain>
    </source>
</reference>